<reference key="1">
    <citation type="journal article" date="2006" name="Genome Res.">
        <title>Massive genome erosion and functional adaptations provide insights into the symbiotic lifestyle of Sodalis glossinidius in the tsetse host.</title>
        <authorList>
            <person name="Toh H."/>
            <person name="Weiss B.L."/>
            <person name="Perkin S.A.H."/>
            <person name="Yamashita A."/>
            <person name="Oshima K."/>
            <person name="Hattori M."/>
            <person name="Aksoy S."/>
        </authorList>
    </citation>
    <scope>NUCLEOTIDE SEQUENCE [LARGE SCALE GENOMIC DNA]</scope>
    <source>
        <strain>morsitans</strain>
    </source>
</reference>
<comment type="function">
    <text evidence="1">One of the primary rRNA binding proteins, it binds directly near the 3'-end of the 23S rRNA, where it nucleates assembly of the 50S subunit.</text>
</comment>
<comment type="subunit">
    <text evidence="1">Part of the 50S ribosomal subunit. Forms a cluster with proteins L14 and L19.</text>
</comment>
<comment type="PTM">
    <text evidence="1">Methylated by PrmB.</text>
</comment>
<comment type="similarity">
    <text evidence="1">Belongs to the universal ribosomal protein uL3 family.</text>
</comment>
<proteinExistence type="inferred from homology"/>
<dbReference type="EMBL" id="AP008232">
    <property type="protein sequence ID" value="BAE75553.1"/>
    <property type="molecule type" value="Genomic_DNA"/>
</dbReference>
<dbReference type="RefSeq" id="WP_011412088.1">
    <property type="nucleotide sequence ID" value="NC_007712.1"/>
</dbReference>
<dbReference type="SMR" id="Q2NQM2"/>
<dbReference type="STRING" id="343509.SG2278"/>
<dbReference type="KEGG" id="sgl:SG2278"/>
<dbReference type="eggNOG" id="COG0087">
    <property type="taxonomic scope" value="Bacteria"/>
</dbReference>
<dbReference type="HOGENOM" id="CLU_044142_4_1_6"/>
<dbReference type="OrthoDB" id="9806135at2"/>
<dbReference type="BioCyc" id="SGLO343509:SGP1_RS20840-MONOMER"/>
<dbReference type="Proteomes" id="UP000001932">
    <property type="component" value="Chromosome"/>
</dbReference>
<dbReference type="GO" id="GO:0022625">
    <property type="term" value="C:cytosolic large ribosomal subunit"/>
    <property type="evidence" value="ECO:0007669"/>
    <property type="project" value="TreeGrafter"/>
</dbReference>
<dbReference type="GO" id="GO:0019843">
    <property type="term" value="F:rRNA binding"/>
    <property type="evidence" value="ECO:0007669"/>
    <property type="project" value="UniProtKB-UniRule"/>
</dbReference>
<dbReference type="GO" id="GO:0003735">
    <property type="term" value="F:structural constituent of ribosome"/>
    <property type="evidence" value="ECO:0007669"/>
    <property type="project" value="InterPro"/>
</dbReference>
<dbReference type="GO" id="GO:0006412">
    <property type="term" value="P:translation"/>
    <property type="evidence" value="ECO:0007669"/>
    <property type="project" value="UniProtKB-UniRule"/>
</dbReference>
<dbReference type="FunFam" id="2.40.30.10:FF:000004">
    <property type="entry name" value="50S ribosomal protein L3"/>
    <property type="match status" value="1"/>
</dbReference>
<dbReference type="FunFam" id="3.30.160.810:FF:000001">
    <property type="entry name" value="50S ribosomal protein L3"/>
    <property type="match status" value="1"/>
</dbReference>
<dbReference type="Gene3D" id="3.30.160.810">
    <property type="match status" value="1"/>
</dbReference>
<dbReference type="Gene3D" id="2.40.30.10">
    <property type="entry name" value="Translation factors"/>
    <property type="match status" value="1"/>
</dbReference>
<dbReference type="HAMAP" id="MF_01325_B">
    <property type="entry name" value="Ribosomal_uL3_B"/>
    <property type="match status" value="1"/>
</dbReference>
<dbReference type="InterPro" id="IPR000597">
    <property type="entry name" value="Ribosomal_uL3"/>
</dbReference>
<dbReference type="InterPro" id="IPR019927">
    <property type="entry name" value="Ribosomal_uL3_bac/org-type"/>
</dbReference>
<dbReference type="InterPro" id="IPR019926">
    <property type="entry name" value="Ribosomal_uL3_CS"/>
</dbReference>
<dbReference type="InterPro" id="IPR009000">
    <property type="entry name" value="Transl_B-barrel_sf"/>
</dbReference>
<dbReference type="NCBIfam" id="TIGR03625">
    <property type="entry name" value="L3_bact"/>
    <property type="match status" value="1"/>
</dbReference>
<dbReference type="PANTHER" id="PTHR11229">
    <property type="entry name" value="50S RIBOSOMAL PROTEIN L3"/>
    <property type="match status" value="1"/>
</dbReference>
<dbReference type="PANTHER" id="PTHR11229:SF16">
    <property type="entry name" value="LARGE RIBOSOMAL SUBUNIT PROTEIN UL3C"/>
    <property type="match status" value="1"/>
</dbReference>
<dbReference type="Pfam" id="PF00297">
    <property type="entry name" value="Ribosomal_L3"/>
    <property type="match status" value="1"/>
</dbReference>
<dbReference type="SUPFAM" id="SSF50447">
    <property type="entry name" value="Translation proteins"/>
    <property type="match status" value="1"/>
</dbReference>
<dbReference type="PROSITE" id="PS00474">
    <property type="entry name" value="RIBOSOMAL_L3"/>
    <property type="match status" value="1"/>
</dbReference>
<protein>
    <recommendedName>
        <fullName evidence="1">Large ribosomal subunit protein uL3</fullName>
    </recommendedName>
    <alternativeName>
        <fullName evidence="3">50S ribosomal protein L3</fullName>
    </alternativeName>
</protein>
<organism>
    <name type="scientific">Sodalis glossinidius (strain morsitans)</name>
    <dbReference type="NCBI Taxonomy" id="343509"/>
    <lineage>
        <taxon>Bacteria</taxon>
        <taxon>Pseudomonadati</taxon>
        <taxon>Pseudomonadota</taxon>
        <taxon>Gammaproteobacteria</taxon>
        <taxon>Enterobacterales</taxon>
        <taxon>Bruguierivoracaceae</taxon>
        <taxon>Sodalis</taxon>
    </lineage>
</organism>
<feature type="chain" id="PRO_0000241413" description="Large ribosomal subunit protein uL3">
    <location>
        <begin position="1"/>
        <end position="209"/>
    </location>
</feature>
<feature type="region of interest" description="Disordered" evidence="2">
    <location>
        <begin position="133"/>
        <end position="152"/>
    </location>
</feature>
<feature type="modified residue" description="N5-methylglutamine" evidence="1">
    <location>
        <position position="150"/>
    </location>
</feature>
<sequence>MKGLIGRKVGMTRIFTEDGVSIPVTVIEIEANRVTQVKDLENDGYRAIQVTAGTKKANRVIKPEAGHFAKAGVEAGRGLWEFRVEDGEEVTVGQSITVELFADVKKVDVTGTSKGKGFAGTVKRWNFRTQDATHGNSLSHRVPGSIGQNQTPGKVFKGKKMAGQLGNERVTVQSLDVVRVDVERNLLLVKGAVPGATGGDLIVKPAVKA</sequence>
<accession>Q2NQM2</accession>
<evidence type="ECO:0000255" key="1">
    <source>
        <dbReference type="HAMAP-Rule" id="MF_01325"/>
    </source>
</evidence>
<evidence type="ECO:0000256" key="2">
    <source>
        <dbReference type="SAM" id="MobiDB-lite"/>
    </source>
</evidence>
<evidence type="ECO:0000305" key="3"/>
<gene>
    <name evidence="1" type="primary">rplC</name>
    <name type="ordered locus">SG2278</name>
</gene>
<name>RL3_SODGM</name>
<keyword id="KW-0488">Methylation</keyword>
<keyword id="KW-0687">Ribonucleoprotein</keyword>
<keyword id="KW-0689">Ribosomal protein</keyword>
<keyword id="KW-0694">RNA-binding</keyword>
<keyword id="KW-0699">rRNA-binding</keyword>